<proteinExistence type="inferred from homology"/>
<gene>
    <name evidence="2" type="primary">trmB</name>
    <name type="ordered locus">BB0510</name>
</gene>
<organism>
    <name type="scientific">Bordetella bronchiseptica (strain ATCC BAA-588 / NCTC 13252 / RB50)</name>
    <name type="common">Alcaligenes bronchisepticus</name>
    <dbReference type="NCBI Taxonomy" id="257310"/>
    <lineage>
        <taxon>Bacteria</taxon>
        <taxon>Pseudomonadati</taxon>
        <taxon>Pseudomonadota</taxon>
        <taxon>Betaproteobacteria</taxon>
        <taxon>Burkholderiales</taxon>
        <taxon>Alcaligenaceae</taxon>
        <taxon>Bordetella</taxon>
    </lineage>
</organism>
<comment type="function">
    <text evidence="2">Catalyzes the formation of N(7)-methylguanine at position 46 (m7G46) in tRNA.</text>
</comment>
<comment type="catalytic activity">
    <reaction evidence="2">
        <text>guanosine(46) in tRNA + S-adenosyl-L-methionine = N(7)-methylguanosine(46) in tRNA + S-adenosyl-L-homocysteine</text>
        <dbReference type="Rhea" id="RHEA:42708"/>
        <dbReference type="Rhea" id="RHEA-COMP:10188"/>
        <dbReference type="Rhea" id="RHEA-COMP:10189"/>
        <dbReference type="ChEBI" id="CHEBI:57856"/>
        <dbReference type="ChEBI" id="CHEBI:59789"/>
        <dbReference type="ChEBI" id="CHEBI:74269"/>
        <dbReference type="ChEBI" id="CHEBI:74480"/>
        <dbReference type="EC" id="2.1.1.33"/>
    </reaction>
</comment>
<comment type="pathway">
    <text evidence="2">tRNA modification; N(7)-methylguanine-tRNA biosynthesis.</text>
</comment>
<comment type="similarity">
    <text evidence="2">Belongs to the class I-like SAM-binding methyltransferase superfamily. TrmB family.</text>
</comment>
<comment type="sequence caution" evidence="4">
    <conflict type="erroneous initiation">
        <sequence resource="EMBL-CDS" id="CAE31010"/>
    </conflict>
</comment>
<feature type="chain" id="PRO_0000171301" description="tRNA (guanine-N(7)-)-methyltransferase">
    <location>
        <begin position="1"/>
        <end position="254"/>
    </location>
</feature>
<feature type="region of interest" description="Disordered" evidence="3">
    <location>
        <begin position="1"/>
        <end position="34"/>
    </location>
</feature>
<feature type="active site" evidence="1">
    <location>
        <position position="162"/>
    </location>
</feature>
<feature type="binding site" evidence="2">
    <location>
        <position position="87"/>
    </location>
    <ligand>
        <name>S-adenosyl-L-methionine</name>
        <dbReference type="ChEBI" id="CHEBI:59789"/>
    </ligand>
</feature>
<feature type="binding site" evidence="2">
    <location>
        <position position="112"/>
    </location>
    <ligand>
        <name>S-adenosyl-L-methionine</name>
        <dbReference type="ChEBI" id="CHEBI:59789"/>
    </ligand>
</feature>
<feature type="binding site" evidence="2">
    <location>
        <position position="139"/>
    </location>
    <ligand>
        <name>S-adenosyl-L-methionine</name>
        <dbReference type="ChEBI" id="CHEBI:59789"/>
    </ligand>
</feature>
<feature type="binding site" evidence="2">
    <location>
        <position position="162"/>
    </location>
    <ligand>
        <name>S-adenosyl-L-methionine</name>
        <dbReference type="ChEBI" id="CHEBI:59789"/>
    </ligand>
</feature>
<feature type="binding site" evidence="2">
    <location>
        <position position="166"/>
    </location>
    <ligand>
        <name>substrate</name>
    </ligand>
</feature>
<feature type="binding site" evidence="2">
    <location>
        <position position="198"/>
    </location>
    <ligand>
        <name>substrate</name>
    </ligand>
</feature>
<feature type="binding site" evidence="2">
    <location>
        <begin position="233"/>
        <end position="236"/>
    </location>
    <ligand>
        <name>substrate</name>
    </ligand>
</feature>
<protein>
    <recommendedName>
        <fullName evidence="2">tRNA (guanine-N(7)-)-methyltransferase</fullName>
        <ecNumber evidence="2">2.1.1.33</ecNumber>
    </recommendedName>
    <alternativeName>
        <fullName evidence="2">tRNA (guanine(46)-N(7))-methyltransferase</fullName>
    </alternativeName>
    <alternativeName>
        <fullName evidence="2">tRNA(m7G46)-methyltransferase</fullName>
    </alternativeName>
</protein>
<name>TRMB_BORBR</name>
<keyword id="KW-0489">Methyltransferase</keyword>
<keyword id="KW-0949">S-adenosyl-L-methionine</keyword>
<keyword id="KW-0808">Transferase</keyword>
<keyword id="KW-0819">tRNA processing</keyword>
<dbReference type="EC" id="2.1.1.33" evidence="2"/>
<dbReference type="EMBL" id="BX640438">
    <property type="protein sequence ID" value="CAE31010.1"/>
    <property type="status" value="ALT_INIT"/>
    <property type="molecule type" value="Genomic_DNA"/>
</dbReference>
<dbReference type="RefSeq" id="WP_033446655.1">
    <property type="nucleotide sequence ID" value="NC_002927.3"/>
</dbReference>
<dbReference type="SMR" id="Q7WQ22"/>
<dbReference type="GeneID" id="93202255"/>
<dbReference type="KEGG" id="bbr:BB0510"/>
<dbReference type="eggNOG" id="COG0220">
    <property type="taxonomic scope" value="Bacteria"/>
</dbReference>
<dbReference type="HOGENOM" id="CLU_050910_0_1_4"/>
<dbReference type="UniPathway" id="UPA00989"/>
<dbReference type="Proteomes" id="UP000001027">
    <property type="component" value="Chromosome"/>
</dbReference>
<dbReference type="GO" id="GO:0043527">
    <property type="term" value="C:tRNA methyltransferase complex"/>
    <property type="evidence" value="ECO:0007669"/>
    <property type="project" value="TreeGrafter"/>
</dbReference>
<dbReference type="GO" id="GO:0008176">
    <property type="term" value="F:tRNA (guanine(46)-N7)-methyltransferase activity"/>
    <property type="evidence" value="ECO:0007669"/>
    <property type="project" value="UniProtKB-UniRule"/>
</dbReference>
<dbReference type="FunFam" id="3.40.50.150:FF:000035">
    <property type="entry name" value="tRNA (guanine-N(7)-)-methyltransferase"/>
    <property type="match status" value="1"/>
</dbReference>
<dbReference type="Gene3D" id="3.40.50.150">
    <property type="entry name" value="Vaccinia Virus protein VP39"/>
    <property type="match status" value="1"/>
</dbReference>
<dbReference type="HAMAP" id="MF_01057">
    <property type="entry name" value="tRNA_methyltr_TrmB"/>
    <property type="match status" value="1"/>
</dbReference>
<dbReference type="InterPro" id="IPR029063">
    <property type="entry name" value="SAM-dependent_MTases_sf"/>
</dbReference>
<dbReference type="InterPro" id="IPR003358">
    <property type="entry name" value="tRNA_(Gua-N-7)_MeTrfase_Trmb"/>
</dbReference>
<dbReference type="InterPro" id="IPR055361">
    <property type="entry name" value="tRNA_methyltr_TrmB_bact"/>
</dbReference>
<dbReference type="NCBIfam" id="TIGR00091">
    <property type="entry name" value="tRNA (guanosine(46)-N7)-methyltransferase TrmB"/>
    <property type="match status" value="1"/>
</dbReference>
<dbReference type="PANTHER" id="PTHR23417">
    <property type="entry name" value="3-DEOXY-D-MANNO-OCTULOSONIC-ACID TRANSFERASE/TRNA GUANINE-N 7 - -METHYLTRANSFERASE"/>
    <property type="match status" value="1"/>
</dbReference>
<dbReference type="PANTHER" id="PTHR23417:SF14">
    <property type="entry name" value="PENTACOTRIPEPTIDE-REPEAT REGION OF PRORP DOMAIN-CONTAINING PROTEIN"/>
    <property type="match status" value="1"/>
</dbReference>
<dbReference type="Pfam" id="PF02390">
    <property type="entry name" value="Methyltransf_4"/>
    <property type="match status" value="1"/>
</dbReference>
<dbReference type="SUPFAM" id="SSF53335">
    <property type="entry name" value="S-adenosyl-L-methionine-dependent methyltransferases"/>
    <property type="match status" value="1"/>
</dbReference>
<dbReference type="PROSITE" id="PS51625">
    <property type="entry name" value="SAM_MT_TRMB"/>
    <property type="match status" value="1"/>
</dbReference>
<sequence>MNTNTPAHPPEGAPLSEATQAALASAEHAPDSPGATHIRSFVHRRGHITQRQRDALEQLMGKWSVPYAPRPLDMAATFGRQAPTILEIGFGMGETTEKIALARPGDNFLGVEVFNAGVGSLLHRIEESAIANLRIVQHDAVEVVRDMIAPDSLAGVHVYFPDPWPKKRHHKRRLLQPPFVALLASRLAPGGYLHCATDWEDYAVQMLEVLGGEPLLRNTADGYAPRPDFRPQTKFETRGLRLGHGVWDLMFKRA</sequence>
<reference key="1">
    <citation type="journal article" date="2003" name="Nat. Genet.">
        <title>Comparative analysis of the genome sequences of Bordetella pertussis, Bordetella parapertussis and Bordetella bronchiseptica.</title>
        <authorList>
            <person name="Parkhill J."/>
            <person name="Sebaihia M."/>
            <person name="Preston A."/>
            <person name="Murphy L.D."/>
            <person name="Thomson N.R."/>
            <person name="Harris D.E."/>
            <person name="Holden M.T.G."/>
            <person name="Churcher C.M."/>
            <person name="Bentley S.D."/>
            <person name="Mungall K.L."/>
            <person name="Cerdeno-Tarraga A.-M."/>
            <person name="Temple L."/>
            <person name="James K.D."/>
            <person name="Harris B."/>
            <person name="Quail M.A."/>
            <person name="Achtman M."/>
            <person name="Atkin R."/>
            <person name="Baker S."/>
            <person name="Basham D."/>
            <person name="Bason N."/>
            <person name="Cherevach I."/>
            <person name="Chillingworth T."/>
            <person name="Collins M."/>
            <person name="Cronin A."/>
            <person name="Davis P."/>
            <person name="Doggett J."/>
            <person name="Feltwell T."/>
            <person name="Goble A."/>
            <person name="Hamlin N."/>
            <person name="Hauser H."/>
            <person name="Holroyd S."/>
            <person name="Jagels K."/>
            <person name="Leather S."/>
            <person name="Moule S."/>
            <person name="Norberczak H."/>
            <person name="O'Neil S."/>
            <person name="Ormond D."/>
            <person name="Price C."/>
            <person name="Rabbinowitsch E."/>
            <person name="Rutter S."/>
            <person name="Sanders M."/>
            <person name="Saunders D."/>
            <person name="Seeger K."/>
            <person name="Sharp S."/>
            <person name="Simmonds M."/>
            <person name="Skelton J."/>
            <person name="Squares R."/>
            <person name="Squares S."/>
            <person name="Stevens K."/>
            <person name="Unwin L."/>
            <person name="Whitehead S."/>
            <person name="Barrell B.G."/>
            <person name="Maskell D.J."/>
        </authorList>
    </citation>
    <scope>NUCLEOTIDE SEQUENCE [LARGE SCALE GENOMIC DNA]</scope>
    <source>
        <strain>ATCC BAA-588 / NCTC 13252 / RB50</strain>
    </source>
</reference>
<evidence type="ECO:0000250" key="1"/>
<evidence type="ECO:0000255" key="2">
    <source>
        <dbReference type="HAMAP-Rule" id="MF_01057"/>
    </source>
</evidence>
<evidence type="ECO:0000256" key="3">
    <source>
        <dbReference type="SAM" id="MobiDB-lite"/>
    </source>
</evidence>
<evidence type="ECO:0000305" key="4"/>
<accession>Q7WQ22</accession>